<proteinExistence type="inferred from homology"/>
<keyword id="KW-0067">ATP-binding</keyword>
<keyword id="KW-0347">Helicase</keyword>
<keyword id="KW-0378">Hydrolase</keyword>
<keyword id="KW-0547">Nucleotide-binding</keyword>
<keyword id="KW-0539">Nucleus</keyword>
<keyword id="KW-1185">Reference proteome</keyword>
<keyword id="KW-0690">Ribosome biogenesis</keyword>
<keyword id="KW-0694">RNA-binding</keyword>
<keyword id="KW-0698">rRNA processing</keyword>
<reference key="1">
    <citation type="journal article" date="2004" name="Nature">
        <title>Genome evolution in yeasts.</title>
        <authorList>
            <person name="Dujon B."/>
            <person name="Sherman D."/>
            <person name="Fischer G."/>
            <person name="Durrens P."/>
            <person name="Casaregola S."/>
            <person name="Lafontaine I."/>
            <person name="de Montigny J."/>
            <person name="Marck C."/>
            <person name="Neuveglise C."/>
            <person name="Talla E."/>
            <person name="Goffard N."/>
            <person name="Frangeul L."/>
            <person name="Aigle M."/>
            <person name="Anthouard V."/>
            <person name="Babour A."/>
            <person name="Barbe V."/>
            <person name="Barnay S."/>
            <person name="Blanchin S."/>
            <person name="Beckerich J.-M."/>
            <person name="Beyne E."/>
            <person name="Bleykasten C."/>
            <person name="Boisrame A."/>
            <person name="Boyer J."/>
            <person name="Cattolico L."/>
            <person name="Confanioleri F."/>
            <person name="de Daruvar A."/>
            <person name="Despons L."/>
            <person name="Fabre E."/>
            <person name="Fairhead C."/>
            <person name="Ferry-Dumazet H."/>
            <person name="Groppi A."/>
            <person name="Hantraye F."/>
            <person name="Hennequin C."/>
            <person name="Jauniaux N."/>
            <person name="Joyet P."/>
            <person name="Kachouri R."/>
            <person name="Kerrest A."/>
            <person name="Koszul R."/>
            <person name="Lemaire M."/>
            <person name="Lesur I."/>
            <person name="Ma L."/>
            <person name="Muller H."/>
            <person name="Nicaud J.-M."/>
            <person name="Nikolski M."/>
            <person name="Oztas S."/>
            <person name="Ozier-Kalogeropoulos O."/>
            <person name="Pellenz S."/>
            <person name="Potier S."/>
            <person name="Richard G.-F."/>
            <person name="Straub M.-L."/>
            <person name="Suleau A."/>
            <person name="Swennen D."/>
            <person name="Tekaia F."/>
            <person name="Wesolowski-Louvel M."/>
            <person name="Westhof E."/>
            <person name="Wirth B."/>
            <person name="Zeniou-Meyer M."/>
            <person name="Zivanovic Y."/>
            <person name="Bolotin-Fukuhara M."/>
            <person name="Thierry A."/>
            <person name="Bouchier C."/>
            <person name="Caudron B."/>
            <person name="Scarpelli C."/>
            <person name="Gaillardin C."/>
            <person name="Weissenbach J."/>
            <person name="Wincker P."/>
            <person name="Souciet J.-L."/>
        </authorList>
    </citation>
    <scope>NUCLEOTIDE SEQUENCE [LARGE SCALE GENOMIC DNA]</scope>
    <source>
        <strain>ATCC 2001 / BCRC 20586 / JCM 3761 / NBRC 0622 / NRRL Y-65 / CBS 138</strain>
    </source>
</reference>
<name>HAS1_CANGA</name>
<feature type="chain" id="PRO_0000232208" description="ATP-dependent RNA helicase HAS1">
    <location>
        <begin position="1"/>
        <end position="494"/>
    </location>
</feature>
<feature type="domain" description="Helicase ATP-binding" evidence="2">
    <location>
        <begin position="60"/>
        <end position="236"/>
    </location>
</feature>
<feature type="domain" description="Helicase C-terminal" evidence="3">
    <location>
        <begin position="250"/>
        <end position="420"/>
    </location>
</feature>
<feature type="region of interest" description="Disordered" evidence="4">
    <location>
        <begin position="1"/>
        <end position="23"/>
    </location>
</feature>
<feature type="short sequence motif" description="Q motif">
    <location>
        <begin position="29"/>
        <end position="57"/>
    </location>
</feature>
<feature type="short sequence motif" description="DEAD box">
    <location>
        <begin position="183"/>
        <end position="186"/>
    </location>
</feature>
<feature type="short sequence motif" description="Bipartite nuclear localization signal" evidence="1">
    <location>
        <begin position="262"/>
        <end position="278"/>
    </location>
</feature>
<feature type="binding site" evidence="2">
    <location>
        <begin position="73"/>
        <end position="80"/>
    </location>
    <ligand>
        <name>ATP</name>
        <dbReference type="ChEBI" id="CHEBI:30616"/>
    </ligand>
</feature>
<sequence>MAQTKRSRDESEKEEVVVKADVESSDVDHSFKSLNLSQPTMRAIEKMGFSKMTPVQARTIPPLMAGRDVLGAAKTGSGKTLAFLLPTIELLHSLKFKPRNGTGVIIITPTRELALQIFGVVRELMEFHSQTFGIVIGGANRRQEAEKLMKGVNLLVATPGRLLDHLQNTKGFIFKNLKALVIDEADRILEIGFEDEMRQIIKILPNEDRQSMLFSATQTTKVEDLSRISLRPGPLFINVVSEHDSSTADGLEQGYVVCESDKRFLLLFSFLKRNQKKKIIVFLSSCNSVKYYAELLNYIDLPVLELHGKQKQQKRTNTFFEFCNAERGILICTDVAARGLDIPAVDWIIQFDPPDDPRDYIHRVGRTARGTNGKGKSLMFLIPNELGFLRYLKAAKVPLNEYEFPTNKIANVQSQLEKLIKSNYYLHQTAKDGYRSYLQAYASHSLKTVYQIDKLDLAKVAKSYGFPVPPKVNITIGASGKTPTVVKKRKTHKH</sequence>
<organism>
    <name type="scientific">Candida glabrata (strain ATCC 2001 / BCRC 20586 / JCM 3761 / NBRC 0622 / NRRL Y-65 / CBS 138)</name>
    <name type="common">Yeast</name>
    <name type="synonym">Nakaseomyces glabratus</name>
    <dbReference type="NCBI Taxonomy" id="284593"/>
    <lineage>
        <taxon>Eukaryota</taxon>
        <taxon>Fungi</taxon>
        <taxon>Dikarya</taxon>
        <taxon>Ascomycota</taxon>
        <taxon>Saccharomycotina</taxon>
        <taxon>Saccharomycetes</taxon>
        <taxon>Saccharomycetales</taxon>
        <taxon>Saccharomycetaceae</taxon>
        <taxon>Nakaseomyces</taxon>
    </lineage>
</organism>
<comment type="function">
    <text>ATP-dependent RNA helicase involved in 40S ribosomal subunit biogenesis. Required for the processing and cleavage of 35S pre-rRNA at sites A0, A1, and A2, leading to mature 18S rRNA.</text>
</comment>
<comment type="catalytic activity">
    <reaction>
        <text>ATP + H2O = ADP + phosphate + H(+)</text>
        <dbReference type="Rhea" id="RHEA:13065"/>
        <dbReference type="ChEBI" id="CHEBI:15377"/>
        <dbReference type="ChEBI" id="CHEBI:15378"/>
        <dbReference type="ChEBI" id="CHEBI:30616"/>
        <dbReference type="ChEBI" id="CHEBI:43474"/>
        <dbReference type="ChEBI" id="CHEBI:456216"/>
        <dbReference type="EC" id="3.6.4.13"/>
    </reaction>
</comment>
<comment type="subunit">
    <text evidence="1">Associates in the nucleolus with the 60S and pre-60S ribosomal subunits.</text>
</comment>
<comment type="subcellular location">
    <subcellularLocation>
        <location evidence="1">Nucleus</location>
        <location evidence="1">Nucleolus</location>
    </subcellularLocation>
</comment>
<comment type="domain">
    <text>The Q motif is unique to and characteristic of the DEAD box family of RNA helicases and controls ATP binding and hydrolysis.</text>
</comment>
<comment type="similarity">
    <text evidence="5">Belongs to the DEAD box helicase family. DDX18/HAS1 subfamily.</text>
</comment>
<accession>Q6FIL3</accession>
<dbReference type="EC" id="3.6.4.13"/>
<dbReference type="EMBL" id="CR380959">
    <property type="protein sequence ID" value="CAG62911.1"/>
    <property type="molecule type" value="Genomic_DNA"/>
</dbReference>
<dbReference type="RefSeq" id="XP_449931.1">
    <property type="nucleotide sequence ID" value="XM_449931.1"/>
</dbReference>
<dbReference type="SMR" id="Q6FIL3"/>
<dbReference type="FunCoup" id="Q6FIL3">
    <property type="interactions" value="1327"/>
</dbReference>
<dbReference type="STRING" id="284593.Q6FIL3"/>
<dbReference type="EnsemblFungi" id="CAGL0M13519g-T">
    <property type="protein sequence ID" value="CAGL0M13519g-T-p1"/>
    <property type="gene ID" value="CAGL0M13519g"/>
</dbReference>
<dbReference type="KEGG" id="cgr:2891222"/>
<dbReference type="CGD" id="CAL0136209">
    <property type="gene designation" value="CAGL0M13519g"/>
</dbReference>
<dbReference type="VEuPathDB" id="FungiDB:B1J91_M13519g"/>
<dbReference type="VEuPathDB" id="FungiDB:CAGL0M13519g"/>
<dbReference type="eggNOG" id="KOG0342">
    <property type="taxonomic scope" value="Eukaryota"/>
</dbReference>
<dbReference type="HOGENOM" id="CLU_003041_26_5_1"/>
<dbReference type="InParanoid" id="Q6FIL3"/>
<dbReference type="OMA" id="LMEFHSQ"/>
<dbReference type="Proteomes" id="UP000002428">
    <property type="component" value="Chromosome M"/>
</dbReference>
<dbReference type="GO" id="GO:0005635">
    <property type="term" value="C:nuclear envelope"/>
    <property type="evidence" value="ECO:0007669"/>
    <property type="project" value="EnsemblFungi"/>
</dbReference>
<dbReference type="GO" id="GO:0005730">
    <property type="term" value="C:nucleolus"/>
    <property type="evidence" value="ECO:0007669"/>
    <property type="project" value="UniProtKB-SubCell"/>
</dbReference>
<dbReference type="GO" id="GO:0030687">
    <property type="term" value="C:preribosome, large subunit precursor"/>
    <property type="evidence" value="ECO:0007669"/>
    <property type="project" value="EnsemblFungi"/>
</dbReference>
<dbReference type="GO" id="GO:0032040">
    <property type="term" value="C:small-subunit processome"/>
    <property type="evidence" value="ECO:0007669"/>
    <property type="project" value="EnsemblFungi"/>
</dbReference>
<dbReference type="GO" id="GO:0005524">
    <property type="term" value="F:ATP binding"/>
    <property type="evidence" value="ECO:0007669"/>
    <property type="project" value="UniProtKB-KW"/>
</dbReference>
<dbReference type="GO" id="GO:0016887">
    <property type="term" value="F:ATP hydrolysis activity"/>
    <property type="evidence" value="ECO:0007669"/>
    <property type="project" value="RHEA"/>
</dbReference>
<dbReference type="GO" id="GO:0042802">
    <property type="term" value="F:identical protein binding"/>
    <property type="evidence" value="ECO:0007669"/>
    <property type="project" value="EnsemblFungi"/>
</dbReference>
<dbReference type="GO" id="GO:0003723">
    <property type="term" value="F:RNA binding"/>
    <property type="evidence" value="ECO:0007669"/>
    <property type="project" value="UniProtKB-KW"/>
</dbReference>
<dbReference type="GO" id="GO:0003724">
    <property type="term" value="F:RNA helicase activity"/>
    <property type="evidence" value="ECO:0007669"/>
    <property type="project" value="UniProtKB-EC"/>
</dbReference>
<dbReference type="GO" id="GO:0000463">
    <property type="term" value="P:maturation of LSU-rRNA from tricistronic rRNA transcript (SSU-rRNA, 5.8S rRNA, LSU-rRNA)"/>
    <property type="evidence" value="ECO:0007669"/>
    <property type="project" value="EnsemblFungi"/>
</dbReference>
<dbReference type="GO" id="GO:0000462">
    <property type="term" value="P:maturation of SSU-rRNA from tricistronic rRNA transcript (SSU-rRNA, 5.8S rRNA, LSU-rRNA)"/>
    <property type="evidence" value="ECO:0007669"/>
    <property type="project" value="EnsemblFungi"/>
</dbReference>
<dbReference type="GO" id="GO:1990417">
    <property type="term" value="P:snoRNA release from pre-rRNA"/>
    <property type="evidence" value="ECO:0007669"/>
    <property type="project" value="EnsemblFungi"/>
</dbReference>
<dbReference type="CDD" id="cd17942">
    <property type="entry name" value="DEADc_DDX18"/>
    <property type="match status" value="1"/>
</dbReference>
<dbReference type="CDD" id="cd18787">
    <property type="entry name" value="SF2_C_DEAD"/>
    <property type="match status" value="1"/>
</dbReference>
<dbReference type="FunFam" id="3.40.50.300:FF:000379">
    <property type="entry name" value="RNA helicase"/>
    <property type="match status" value="1"/>
</dbReference>
<dbReference type="FunFam" id="3.40.50.300:FF:000460">
    <property type="entry name" value="RNA helicase"/>
    <property type="match status" value="1"/>
</dbReference>
<dbReference type="Gene3D" id="3.40.50.300">
    <property type="entry name" value="P-loop containing nucleotide triphosphate hydrolases"/>
    <property type="match status" value="2"/>
</dbReference>
<dbReference type="InterPro" id="IPR044773">
    <property type="entry name" value="DDX18/Has1_DEADc"/>
</dbReference>
<dbReference type="InterPro" id="IPR011545">
    <property type="entry name" value="DEAD/DEAH_box_helicase_dom"/>
</dbReference>
<dbReference type="InterPro" id="IPR014001">
    <property type="entry name" value="Helicase_ATP-bd"/>
</dbReference>
<dbReference type="InterPro" id="IPR001650">
    <property type="entry name" value="Helicase_C-like"/>
</dbReference>
<dbReference type="InterPro" id="IPR027417">
    <property type="entry name" value="P-loop_NTPase"/>
</dbReference>
<dbReference type="InterPro" id="IPR000629">
    <property type="entry name" value="RNA-helicase_DEAD-box_CS"/>
</dbReference>
<dbReference type="InterPro" id="IPR014014">
    <property type="entry name" value="RNA_helicase_DEAD_Q_motif"/>
</dbReference>
<dbReference type="InterPro" id="IPR025313">
    <property type="entry name" value="SPB4-like_CTE"/>
</dbReference>
<dbReference type="PANTHER" id="PTHR24031">
    <property type="entry name" value="RNA HELICASE"/>
    <property type="match status" value="1"/>
</dbReference>
<dbReference type="Pfam" id="PF13959">
    <property type="entry name" value="CTE_SPB4"/>
    <property type="match status" value="1"/>
</dbReference>
<dbReference type="Pfam" id="PF00270">
    <property type="entry name" value="DEAD"/>
    <property type="match status" value="1"/>
</dbReference>
<dbReference type="Pfam" id="PF00271">
    <property type="entry name" value="Helicase_C"/>
    <property type="match status" value="1"/>
</dbReference>
<dbReference type="SMART" id="SM00487">
    <property type="entry name" value="DEXDc"/>
    <property type="match status" value="1"/>
</dbReference>
<dbReference type="SMART" id="SM01178">
    <property type="entry name" value="DUF4217"/>
    <property type="match status" value="1"/>
</dbReference>
<dbReference type="SMART" id="SM00490">
    <property type="entry name" value="HELICc"/>
    <property type="match status" value="1"/>
</dbReference>
<dbReference type="SUPFAM" id="SSF52540">
    <property type="entry name" value="P-loop containing nucleoside triphosphate hydrolases"/>
    <property type="match status" value="1"/>
</dbReference>
<dbReference type="PROSITE" id="PS00039">
    <property type="entry name" value="DEAD_ATP_HELICASE"/>
    <property type="match status" value="1"/>
</dbReference>
<dbReference type="PROSITE" id="PS51192">
    <property type="entry name" value="HELICASE_ATP_BIND_1"/>
    <property type="match status" value="1"/>
</dbReference>
<dbReference type="PROSITE" id="PS51194">
    <property type="entry name" value="HELICASE_CTER"/>
    <property type="match status" value="1"/>
</dbReference>
<dbReference type="PROSITE" id="PS51195">
    <property type="entry name" value="Q_MOTIF"/>
    <property type="match status" value="1"/>
</dbReference>
<gene>
    <name type="primary">HAS1</name>
    <name type="ordered locus">CAGL0M13519g</name>
</gene>
<evidence type="ECO:0000250" key="1"/>
<evidence type="ECO:0000255" key="2">
    <source>
        <dbReference type="PROSITE-ProRule" id="PRU00541"/>
    </source>
</evidence>
<evidence type="ECO:0000255" key="3">
    <source>
        <dbReference type="PROSITE-ProRule" id="PRU00542"/>
    </source>
</evidence>
<evidence type="ECO:0000256" key="4">
    <source>
        <dbReference type="SAM" id="MobiDB-lite"/>
    </source>
</evidence>
<evidence type="ECO:0000305" key="5"/>
<protein>
    <recommendedName>
        <fullName>ATP-dependent RNA helicase HAS1</fullName>
        <ecNumber>3.6.4.13</ecNumber>
    </recommendedName>
</protein>